<comment type="function">
    <text evidence="1">Nucleoside triphosphate pyrophosphatase. May have a dual role in cell division arrest and in preventing the incorporation of modified nucleotides into cellular nucleic acids.</text>
</comment>
<comment type="catalytic activity">
    <reaction evidence="1">
        <text>a ribonucleoside 5'-triphosphate + H2O = a ribonucleoside 5'-phosphate + diphosphate + H(+)</text>
        <dbReference type="Rhea" id="RHEA:23996"/>
        <dbReference type="ChEBI" id="CHEBI:15377"/>
        <dbReference type="ChEBI" id="CHEBI:15378"/>
        <dbReference type="ChEBI" id="CHEBI:33019"/>
        <dbReference type="ChEBI" id="CHEBI:58043"/>
        <dbReference type="ChEBI" id="CHEBI:61557"/>
        <dbReference type="EC" id="3.6.1.9"/>
    </reaction>
</comment>
<comment type="catalytic activity">
    <reaction evidence="1">
        <text>a 2'-deoxyribonucleoside 5'-triphosphate + H2O = a 2'-deoxyribonucleoside 5'-phosphate + diphosphate + H(+)</text>
        <dbReference type="Rhea" id="RHEA:44644"/>
        <dbReference type="ChEBI" id="CHEBI:15377"/>
        <dbReference type="ChEBI" id="CHEBI:15378"/>
        <dbReference type="ChEBI" id="CHEBI:33019"/>
        <dbReference type="ChEBI" id="CHEBI:61560"/>
        <dbReference type="ChEBI" id="CHEBI:65317"/>
        <dbReference type="EC" id="3.6.1.9"/>
    </reaction>
</comment>
<comment type="cofactor">
    <cofactor evidence="1">
        <name>a divalent metal cation</name>
        <dbReference type="ChEBI" id="CHEBI:60240"/>
    </cofactor>
</comment>
<comment type="subcellular location">
    <subcellularLocation>
        <location evidence="1">Cytoplasm</location>
    </subcellularLocation>
</comment>
<comment type="similarity">
    <text evidence="1">Belongs to the Maf family.</text>
</comment>
<reference key="1">
    <citation type="journal article" date="2006" name="J. Bacteriol.">
        <title>The genome of the obligately intracellular bacterium Ehrlichia canis reveals themes of complex membrane structure and immune evasion strategies.</title>
        <authorList>
            <person name="Mavromatis K."/>
            <person name="Doyle C.K."/>
            <person name="Lykidis A."/>
            <person name="Ivanova N."/>
            <person name="Francino M.P."/>
            <person name="Chain P."/>
            <person name="Shin M."/>
            <person name="Malfatti S."/>
            <person name="Larimer F."/>
            <person name="Copeland A."/>
            <person name="Detter J.C."/>
            <person name="Land M."/>
            <person name="Richardson P.M."/>
            <person name="Yu X.J."/>
            <person name="Walker D.H."/>
            <person name="McBride J.W."/>
            <person name="Kyrpides N.C."/>
        </authorList>
    </citation>
    <scope>NUCLEOTIDE SEQUENCE [LARGE SCALE GENOMIC DNA]</scope>
    <source>
        <strain>Jake</strain>
    </source>
</reference>
<proteinExistence type="inferred from homology"/>
<feature type="chain" id="PRO_0000267302" description="Nucleoside triphosphate pyrophosphatase">
    <location>
        <begin position="1"/>
        <end position="192"/>
    </location>
</feature>
<feature type="active site" description="Proton acceptor" evidence="1">
    <location>
        <position position="73"/>
    </location>
</feature>
<keyword id="KW-0963">Cytoplasm</keyword>
<keyword id="KW-0378">Hydrolase</keyword>
<keyword id="KW-0546">Nucleotide metabolism</keyword>
<organism>
    <name type="scientific">Ehrlichia canis (strain Jake)</name>
    <dbReference type="NCBI Taxonomy" id="269484"/>
    <lineage>
        <taxon>Bacteria</taxon>
        <taxon>Pseudomonadati</taxon>
        <taxon>Pseudomonadota</taxon>
        <taxon>Alphaproteobacteria</taxon>
        <taxon>Rickettsiales</taxon>
        <taxon>Anaplasmataceae</taxon>
        <taxon>Ehrlichia</taxon>
    </lineage>
</organism>
<accession>Q3YRV1</accession>
<dbReference type="EC" id="3.6.1.9" evidence="1"/>
<dbReference type="EMBL" id="CP000107">
    <property type="protein sequence ID" value="AAZ68554.1"/>
    <property type="molecule type" value="Genomic_DNA"/>
</dbReference>
<dbReference type="RefSeq" id="WP_011304632.1">
    <property type="nucleotide sequence ID" value="NC_007354.1"/>
</dbReference>
<dbReference type="SMR" id="Q3YRV1"/>
<dbReference type="FunCoup" id="Q3YRV1">
    <property type="interactions" value="216"/>
</dbReference>
<dbReference type="STRING" id="269484.Ecaj_0518"/>
<dbReference type="KEGG" id="ecn:Ecaj_0518"/>
<dbReference type="eggNOG" id="COG0424">
    <property type="taxonomic scope" value="Bacteria"/>
</dbReference>
<dbReference type="HOGENOM" id="CLU_040416_2_0_5"/>
<dbReference type="InParanoid" id="Q3YRV1"/>
<dbReference type="Proteomes" id="UP000000435">
    <property type="component" value="Chromosome"/>
</dbReference>
<dbReference type="GO" id="GO:0005737">
    <property type="term" value="C:cytoplasm"/>
    <property type="evidence" value="ECO:0007669"/>
    <property type="project" value="UniProtKB-SubCell"/>
</dbReference>
<dbReference type="GO" id="GO:0047429">
    <property type="term" value="F:nucleoside triphosphate diphosphatase activity"/>
    <property type="evidence" value="ECO:0007669"/>
    <property type="project" value="UniProtKB-EC"/>
</dbReference>
<dbReference type="GO" id="GO:0009117">
    <property type="term" value="P:nucleotide metabolic process"/>
    <property type="evidence" value="ECO:0007669"/>
    <property type="project" value="UniProtKB-KW"/>
</dbReference>
<dbReference type="CDD" id="cd00555">
    <property type="entry name" value="Maf"/>
    <property type="match status" value="1"/>
</dbReference>
<dbReference type="Gene3D" id="3.90.950.10">
    <property type="match status" value="1"/>
</dbReference>
<dbReference type="HAMAP" id="MF_00528">
    <property type="entry name" value="Maf"/>
    <property type="match status" value="1"/>
</dbReference>
<dbReference type="InterPro" id="IPR029001">
    <property type="entry name" value="ITPase-like_fam"/>
</dbReference>
<dbReference type="InterPro" id="IPR003697">
    <property type="entry name" value="Maf-like"/>
</dbReference>
<dbReference type="NCBIfam" id="TIGR00172">
    <property type="entry name" value="maf"/>
    <property type="match status" value="1"/>
</dbReference>
<dbReference type="NCBIfam" id="NF010946">
    <property type="entry name" value="PRK14366.1"/>
    <property type="match status" value="1"/>
</dbReference>
<dbReference type="PANTHER" id="PTHR43213">
    <property type="entry name" value="BIFUNCTIONAL DTTP/UTP PYROPHOSPHATASE/METHYLTRANSFERASE PROTEIN-RELATED"/>
    <property type="match status" value="1"/>
</dbReference>
<dbReference type="PANTHER" id="PTHR43213:SF5">
    <property type="entry name" value="BIFUNCTIONAL DTTP_UTP PYROPHOSPHATASE_METHYLTRANSFERASE PROTEIN-RELATED"/>
    <property type="match status" value="1"/>
</dbReference>
<dbReference type="Pfam" id="PF02545">
    <property type="entry name" value="Maf"/>
    <property type="match status" value="1"/>
</dbReference>
<dbReference type="PIRSF" id="PIRSF006305">
    <property type="entry name" value="Maf"/>
    <property type="match status" value="1"/>
</dbReference>
<dbReference type="SUPFAM" id="SSF52972">
    <property type="entry name" value="ITPase-like"/>
    <property type="match status" value="1"/>
</dbReference>
<gene>
    <name type="ordered locus">Ecaj_0518</name>
</gene>
<protein>
    <recommendedName>
        <fullName evidence="1">Nucleoside triphosphate pyrophosphatase</fullName>
        <ecNumber evidence="1">3.6.1.9</ecNumber>
    </recommendedName>
    <alternativeName>
        <fullName evidence="1">Nucleotide pyrophosphatase</fullName>
        <shortName evidence="1">Nucleotide PPase</shortName>
    </alternativeName>
</protein>
<sequence>MLKFDNLILASSSKQRLSLLEQIGVVPGEIISPDIDEVILKKELPKAYSIRIAQAKCEKVKLLHPDKFVLSADTVVCCGRRILPKVETEEQALECIRLISGRRHRVYTTVCLYTPHGKLHCRNVVTVVKFKNLSVQEIDAYIDSRQWYGKSGACSIQTNAGKFVLSINGSYSSIIGLPLYETYSILNRYFSI</sequence>
<name>NTPP_EHRCJ</name>
<evidence type="ECO:0000255" key="1">
    <source>
        <dbReference type="HAMAP-Rule" id="MF_00528"/>
    </source>
</evidence>